<name>IF1_BACCZ</name>
<sequence length="72" mass="8186">MAKDDVIEVEGTVLETLPNAMFKVELENGHVVLAHVSGKIRMNFIRILPGDKVTVELSPYDLNRGRITYRFK</sequence>
<protein>
    <recommendedName>
        <fullName evidence="1">Translation initiation factor IF-1</fullName>
    </recommendedName>
</protein>
<evidence type="ECO:0000255" key="1">
    <source>
        <dbReference type="HAMAP-Rule" id="MF_00075"/>
    </source>
</evidence>
<accession>Q63H67</accession>
<organism>
    <name type="scientific">Bacillus cereus (strain ZK / E33L)</name>
    <dbReference type="NCBI Taxonomy" id="288681"/>
    <lineage>
        <taxon>Bacteria</taxon>
        <taxon>Bacillati</taxon>
        <taxon>Bacillota</taxon>
        <taxon>Bacilli</taxon>
        <taxon>Bacillales</taxon>
        <taxon>Bacillaceae</taxon>
        <taxon>Bacillus</taxon>
        <taxon>Bacillus cereus group</taxon>
    </lineage>
</organism>
<feature type="chain" id="PRO_0000095731" description="Translation initiation factor IF-1">
    <location>
        <begin position="1"/>
        <end position="72"/>
    </location>
</feature>
<feature type="domain" description="S1-like" evidence="1">
    <location>
        <begin position="1"/>
        <end position="72"/>
    </location>
</feature>
<feature type="modified residue" description="Phosphotyrosine" evidence="1">
    <location>
        <position position="60"/>
    </location>
</feature>
<keyword id="KW-0963">Cytoplasm</keyword>
<keyword id="KW-0396">Initiation factor</keyword>
<keyword id="KW-0597">Phosphoprotein</keyword>
<keyword id="KW-0648">Protein biosynthesis</keyword>
<keyword id="KW-0694">RNA-binding</keyword>
<keyword id="KW-0699">rRNA-binding</keyword>
<proteinExistence type="inferred from homology"/>
<gene>
    <name evidence="1" type="primary">infA</name>
    <name type="ordered locus">BCE33L0127</name>
</gene>
<reference key="1">
    <citation type="journal article" date="2006" name="J. Bacteriol.">
        <title>Pathogenomic sequence analysis of Bacillus cereus and Bacillus thuringiensis isolates closely related to Bacillus anthracis.</title>
        <authorList>
            <person name="Han C.S."/>
            <person name="Xie G."/>
            <person name="Challacombe J.F."/>
            <person name="Altherr M.R."/>
            <person name="Bhotika S.S."/>
            <person name="Bruce D."/>
            <person name="Campbell C.S."/>
            <person name="Campbell M.L."/>
            <person name="Chen J."/>
            <person name="Chertkov O."/>
            <person name="Cleland C."/>
            <person name="Dimitrijevic M."/>
            <person name="Doggett N.A."/>
            <person name="Fawcett J.J."/>
            <person name="Glavina T."/>
            <person name="Goodwin L.A."/>
            <person name="Hill K.K."/>
            <person name="Hitchcock P."/>
            <person name="Jackson P.J."/>
            <person name="Keim P."/>
            <person name="Kewalramani A.R."/>
            <person name="Longmire J."/>
            <person name="Lucas S."/>
            <person name="Malfatti S."/>
            <person name="McMurry K."/>
            <person name="Meincke L.J."/>
            <person name="Misra M."/>
            <person name="Moseman B.L."/>
            <person name="Mundt M."/>
            <person name="Munk A.C."/>
            <person name="Okinaka R.T."/>
            <person name="Parson-Quintana B."/>
            <person name="Reilly L.P."/>
            <person name="Richardson P."/>
            <person name="Robinson D.L."/>
            <person name="Rubin E."/>
            <person name="Saunders E."/>
            <person name="Tapia R."/>
            <person name="Tesmer J.G."/>
            <person name="Thayer N."/>
            <person name="Thompson L.S."/>
            <person name="Tice H."/>
            <person name="Ticknor L.O."/>
            <person name="Wills P.L."/>
            <person name="Brettin T.S."/>
            <person name="Gilna P."/>
        </authorList>
    </citation>
    <scope>NUCLEOTIDE SEQUENCE [LARGE SCALE GENOMIC DNA]</scope>
    <source>
        <strain>ZK / E33L</strain>
    </source>
</reference>
<comment type="function">
    <text evidence="1">One of the essential components for the initiation of protein synthesis. Stabilizes the binding of IF-2 and IF-3 on the 30S subunit to which N-formylmethionyl-tRNA(fMet) subsequently binds. Helps modulate mRNA selection, yielding the 30S pre-initiation complex (PIC). Upon addition of the 50S ribosomal subunit IF-1, IF-2 and IF-3 are released leaving the mature 70S translation initiation complex.</text>
</comment>
<comment type="subunit">
    <text evidence="1">Component of the 30S ribosomal translation pre-initiation complex which assembles on the 30S ribosome in the order IF-2 and IF-3, IF-1 and N-formylmethionyl-tRNA(fMet); mRNA recruitment can occur at any time during PIC assembly.</text>
</comment>
<comment type="subcellular location">
    <subcellularLocation>
        <location evidence="1">Cytoplasm</location>
    </subcellularLocation>
</comment>
<comment type="similarity">
    <text evidence="1">Belongs to the IF-1 family.</text>
</comment>
<dbReference type="EMBL" id="CP000001">
    <property type="protein sequence ID" value="AAU20105.1"/>
    <property type="molecule type" value="Genomic_DNA"/>
</dbReference>
<dbReference type="RefSeq" id="WP_001029884.1">
    <property type="nucleotide sequence ID" value="NZ_CP009968.1"/>
</dbReference>
<dbReference type="SMR" id="Q63H67"/>
<dbReference type="GeneID" id="93010920"/>
<dbReference type="KEGG" id="bcz:BCE33L0127"/>
<dbReference type="PATRIC" id="fig|288681.22.peg.24"/>
<dbReference type="Proteomes" id="UP000002612">
    <property type="component" value="Chromosome"/>
</dbReference>
<dbReference type="GO" id="GO:0005829">
    <property type="term" value="C:cytosol"/>
    <property type="evidence" value="ECO:0007669"/>
    <property type="project" value="TreeGrafter"/>
</dbReference>
<dbReference type="GO" id="GO:0043022">
    <property type="term" value="F:ribosome binding"/>
    <property type="evidence" value="ECO:0007669"/>
    <property type="project" value="UniProtKB-UniRule"/>
</dbReference>
<dbReference type="GO" id="GO:0019843">
    <property type="term" value="F:rRNA binding"/>
    <property type="evidence" value="ECO:0007669"/>
    <property type="project" value="UniProtKB-UniRule"/>
</dbReference>
<dbReference type="GO" id="GO:0003743">
    <property type="term" value="F:translation initiation factor activity"/>
    <property type="evidence" value="ECO:0007669"/>
    <property type="project" value="UniProtKB-UniRule"/>
</dbReference>
<dbReference type="CDD" id="cd04451">
    <property type="entry name" value="S1_IF1"/>
    <property type="match status" value="1"/>
</dbReference>
<dbReference type="FunFam" id="2.40.50.140:FF:000002">
    <property type="entry name" value="Translation initiation factor IF-1"/>
    <property type="match status" value="1"/>
</dbReference>
<dbReference type="Gene3D" id="2.40.50.140">
    <property type="entry name" value="Nucleic acid-binding proteins"/>
    <property type="match status" value="1"/>
</dbReference>
<dbReference type="HAMAP" id="MF_00075">
    <property type="entry name" value="IF_1"/>
    <property type="match status" value="1"/>
</dbReference>
<dbReference type="InterPro" id="IPR012340">
    <property type="entry name" value="NA-bd_OB-fold"/>
</dbReference>
<dbReference type="InterPro" id="IPR006196">
    <property type="entry name" value="RNA-binding_domain_S1_IF1"/>
</dbReference>
<dbReference type="InterPro" id="IPR003029">
    <property type="entry name" value="S1_domain"/>
</dbReference>
<dbReference type="InterPro" id="IPR004368">
    <property type="entry name" value="TIF_IF1"/>
</dbReference>
<dbReference type="NCBIfam" id="TIGR00008">
    <property type="entry name" value="infA"/>
    <property type="match status" value="1"/>
</dbReference>
<dbReference type="PANTHER" id="PTHR33370">
    <property type="entry name" value="TRANSLATION INITIATION FACTOR IF-1, CHLOROPLASTIC"/>
    <property type="match status" value="1"/>
</dbReference>
<dbReference type="PANTHER" id="PTHR33370:SF1">
    <property type="entry name" value="TRANSLATION INITIATION FACTOR IF-1, CHLOROPLASTIC"/>
    <property type="match status" value="1"/>
</dbReference>
<dbReference type="Pfam" id="PF01176">
    <property type="entry name" value="eIF-1a"/>
    <property type="match status" value="1"/>
</dbReference>
<dbReference type="SMART" id="SM00316">
    <property type="entry name" value="S1"/>
    <property type="match status" value="1"/>
</dbReference>
<dbReference type="SUPFAM" id="SSF50249">
    <property type="entry name" value="Nucleic acid-binding proteins"/>
    <property type="match status" value="1"/>
</dbReference>
<dbReference type="PROSITE" id="PS50832">
    <property type="entry name" value="S1_IF1_TYPE"/>
    <property type="match status" value="1"/>
</dbReference>